<accession>Q54S20</accession>
<accession>Q9NDS4</accession>
<organism>
    <name type="scientific">Dictyostelium discoideum</name>
    <name type="common">Social amoeba</name>
    <dbReference type="NCBI Taxonomy" id="44689"/>
    <lineage>
        <taxon>Eukaryota</taxon>
        <taxon>Amoebozoa</taxon>
        <taxon>Evosea</taxon>
        <taxon>Eumycetozoa</taxon>
        <taxon>Dictyostelia</taxon>
        <taxon>Dictyosteliales</taxon>
        <taxon>Dictyosteliaceae</taxon>
        <taxon>Dictyostelium</taxon>
    </lineage>
</organism>
<dbReference type="EMBL" id="AB030033">
    <property type="protein sequence ID" value="BAB01489.1"/>
    <property type="molecule type" value="Genomic_DNA"/>
</dbReference>
<dbReference type="EMBL" id="AAFI02000047">
    <property type="protein sequence ID" value="EAL66047.1"/>
    <property type="molecule type" value="Genomic_DNA"/>
</dbReference>
<dbReference type="RefSeq" id="XP_640219.1">
    <property type="nucleotide sequence ID" value="XM_635127.1"/>
</dbReference>
<dbReference type="FunCoup" id="Q54S20">
    <property type="interactions" value="492"/>
</dbReference>
<dbReference type="STRING" id="44689.Q54S20"/>
<dbReference type="GlyGen" id="Q54S20">
    <property type="glycosylation" value="3 sites"/>
</dbReference>
<dbReference type="PaxDb" id="44689-DDB0214900"/>
<dbReference type="EnsemblProtists" id="EAL66047">
    <property type="protein sequence ID" value="EAL66047"/>
    <property type="gene ID" value="DDB_G0282375"/>
</dbReference>
<dbReference type="GeneID" id="8623759"/>
<dbReference type="KEGG" id="ddi:DDB_G0282375"/>
<dbReference type="dictyBase" id="DDB_G0282375">
    <property type="gene designation" value="amiB"/>
</dbReference>
<dbReference type="VEuPathDB" id="AmoebaDB:DDB_G0282375"/>
<dbReference type="eggNOG" id="KOG3600">
    <property type="taxonomic scope" value="Eukaryota"/>
</dbReference>
<dbReference type="HOGENOM" id="CLU_227451_0_0_1"/>
<dbReference type="InParanoid" id="Q54S20"/>
<dbReference type="OMA" id="NKCRRIS"/>
<dbReference type="PRO" id="PR:Q54S20"/>
<dbReference type="Proteomes" id="UP000002195">
    <property type="component" value="Chromosome 3"/>
</dbReference>
<dbReference type="GO" id="GO:0016592">
    <property type="term" value="C:mediator complex"/>
    <property type="evidence" value="ECO:0000250"/>
    <property type="project" value="dictyBase"/>
</dbReference>
<dbReference type="GO" id="GO:0003712">
    <property type="term" value="F:transcription coregulator activity"/>
    <property type="evidence" value="ECO:0007669"/>
    <property type="project" value="InterPro"/>
</dbReference>
<dbReference type="GO" id="GO:0031152">
    <property type="term" value="P:aggregation involved in sorocarp development"/>
    <property type="evidence" value="ECO:0000315"/>
    <property type="project" value="dictyBase"/>
</dbReference>
<dbReference type="GO" id="GO:0048870">
    <property type="term" value="P:cell motility"/>
    <property type="evidence" value="ECO:0000315"/>
    <property type="project" value="dictyBase"/>
</dbReference>
<dbReference type="GO" id="GO:0006935">
    <property type="term" value="P:chemotaxis"/>
    <property type="evidence" value="ECO:0000315"/>
    <property type="project" value="dictyBase"/>
</dbReference>
<dbReference type="GO" id="GO:0010468">
    <property type="term" value="P:regulation of gene expression"/>
    <property type="evidence" value="ECO:0000315"/>
    <property type="project" value="dictyBase"/>
</dbReference>
<dbReference type="GO" id="GO:0006357">
    <property type="term" value="P:regulation of transcription by RNA polymerase II"/>
    <property type="evidence" value="ECO:0007669"/>
    <property type="project" value="InterPro"/>
</dbReference>
<dbReference type="InterPro" id="IPR052886">
    <property type="entry name" value="LCS_TC/CRSF"/>
</dbReference>
<dbReference type="InterPro" id="IPR009401">
    <property type="entry name" value="Med13_C"/>
</dbReference>
<dbReference type="InterPro" id="IPR041285">
    <property type="entry name" value="MID_MedPIWI"/>
</dbReference>
<dbReference type="PANTHER" id="PTHR23261:SF77">
    <property type="entry name" value="GROUND-LIKE DOMAIN-CONTAINING PROTEIN"/>
    <property type="match status" value="1"/>
</dbReference>
<dbReference type="PANTHER" id="PTHR23261">
    <property type="entry name" value="GROUNDHOG-RELATED"/>
    <property type="match status" value="1"/>
</dbReference>
<dbReference type="Pfam" id="PF06333">
    <property type="entry name" value="Med13_C"/>
    <property type="match status" value="1"/>
</dbReference>
<dbReference type="Pfam" id="PF18296">
    <property type="entry name" value="MID_MedPIWI"/>
    <property type="match status" value="1"/>
</dbReference>
<protein>
    <recommendedName>
        <fullName>Mediator of RNA polymerase II transcription subunit 13</fullName>
    </recommendedName>
    <alternativeName>
        <fullName>Aggregation minus B protein</fullName>
    </alternativeName>
    <alternativeName>
        <fullName>Mediator complex subunit 13</fullName>
    </alternativeName>
</protein>
<evidence type="ECO:0000250" key="1"/>
<evidence type="ECO:0000256" key="2">
    <source>
        <dbReference type="SAM" id="MobiDB-lite"/>
    </source>
</evidence>
<evidence type="ECO:0000269" key="3">
    <source>
    </source>
</evidence>
<evidence type="ECO:0000269" key="4">
    <source>
    </source>
</evidence>
<evidence type="ECO:0000305" key="5"/>
<comment type="function">
    <text evidence="1">Component of the Mediator complex, a coactivator involved in the regulated transcription of nearly all RNA polymerase II-dependent genes. Mediator functions as a bridge to convey information from gene-specific regulatory proteins to the basal RNA polymerase II transcription machinery. Mediator is recruited to promoters by direct interactions with regulatory proteins and serves as a scaffold for the assembly of a functional preinitiation complex with RNA polymerase II and the general transcription factors (By similarity). Required for the starvation-induced activation of the ACA (adenylyl cyclase) expression pathway at the growth/differentiation transition.</text>
</comment>
<comment type="subunit">
    <text evidence="1">Component of the Mediator complex.</text>
</comment>
<comment type="subcellular location">
    <subcellularLocation>
        <location evidence="1">Nucleus</location>
    </subcellularLocation>
</comment>
<comment type="developmental stage">
    <text evidence="3">The level of mRNA increases 4 hours after starting starvation and remains relatively constant thereafter.</text>
</comment>
<comment type="disruption phenotype">
    <text evidence="3 4">When starved, cells fail to turn off expression of the growth-phase gene cprD and to turn on expression of the adenylyl cyclase gene, resulting in an undetectable level of cAMP and a strong reduction of the cAMP-relay response. They join streams of aggregating cells but with less efficiency than wild-type cells and show a dramatically reduced rate of sporulation. In the migratory slug, they are almost exclusively located in the posterior region and many cells are found in the slime trail that is left behind the slug. When the fruiting body is formed, most cells are found in the basal disks while a minor part is located in the mature spores and stalks. Starved mutant cells are elongated laterally and form one large laemllipodium along the front side arc of the cell. They have a keratocyte-like behavior, moving persistently without changing directions over long distances.</text>
</comment>
<comment type="similarity">
    <text evidence="5">Belongs to the Mediator complex subunit 13 family.</text>
</comment>
<feature type="chain" id="PRO_0000327756" description="Mediator of RNA polymerase II transcription subunit 13">
    <location>
        <begin position="1"/>
        <end position="2678"/>
    </location>
</feature>
<feature type="region of interest" description="Disordered" evidence="2">
    <location>
        <begin position="1"/>
        <end position="52"/>
    </location>
</feature>
<feature type="region of interest" description="Disordered" evidence="2">
    <location>
        <begin position="140"/>
        <end position="285"/>
    </location>
</feature>
<feature type="region of interest" description="Disordered" evidence="2">
    <location>
        <begin position="495"/>
        <end position="524"/>
    </location>
</feature>
<feature type="region of interest" description="Disordered" evidence="2">
    <location>
        <begin position="553"/>
        <end position="615"/>
    </location>
</feature>
<feature type="region of interest" description="Disordered" evidence="2">
    <location>
        <begin position="852"/>
        <end position="993"/>
    </location>
</feature>
<feature type="region of interest" description="Disordered" evidence="2">
    <location>
        <begin position="1070"/>
        <end position="1253"/>
    </location>
</feature>
<feature type="region of interest" description="Disordered" evidence="2">
    <location>
        <begin position="1278"/>
        <end position="1394"/>
    </location>
</feature>
<feature type="region of interest" description="Disordered" evidence="2">
    <location>
        <begin position="1462"/>
        <end position="1502"/>
    </location>
</feature>
<feature type="region of interest" description="Disordered" evidence="2">
    <location>
        <begin position="1806"/>
        <end position="1838"/>
    </location>
</feature>
<feature type="region of interest" description="Disordered" evidence="2">
    <location>
        <begin position="2075"/>
        <end position="2105"/>
    </location>
</feature>
<feature type="region of interest" description="Disordered" evidence="2">
    <location>
        <begin position="2225"/>
        <end position="2307"/>
    </location>
</feature>
<feature type="region of interest" description="Disordered" evidence="2">
    <location>
        <begin position="2656"/>
        <end position="2678"/>
    </location>
</feature>
<feature type="compositionally biased region" description="Low complexity" evidence="2">
    <location>
        <begin position="15"/>
        <end position="48"/>
    </location>
</feature>
<feature type="compositionally biased region" description="Low complexity" evidence="2">
    <location>
        <begin position="144"/>
        <end position="162"/>
    </location>
</feature>
<feature type="compositionally biased region" description="Low complexity" evidence="2">
    <location>
        <begin position="169"/>
        <end position="186"/>
    </location>
</feature>
<feature type="compositionally biased region" description="Polar residues" evidence="2">
    <location>
        <begin position="187"/>
        <end position="206"/>
    </location>
</feature>
<feature type="compositionally biased region" description="Low complexity" evidence="2">
    <location>
        <begin position="207"/>
        <end position="276"/>
    </location>
</feature>
<feature type="compositionally biased region" description="Low complexity" evidence="2">
    <location>
        <begin position="553"/>
        <end position="573"/>
    </location>
</feature>
<feature type="compositionally biased region" description="Low complexity" evidence="2">
    <location>
        <begin position="587"/>
        <end position="615"/>
    </location>
</feature>
<feature type="compositionally biased region" description="Polar residues" evidence="2">
    <location>
        <begin position="855"/>
        <end position="872"/>
    </location>
</feature>
<feature type="compositionally biased region" description="Basic residues" evidence="2">
    <location>
        <begin position="901"/>
        <end position="916"/>
    </location>
</feature>
<feature type="compositionally biased region" description="Low complexity" evidence="2">
    <location>
        <begin position="922"/>
        <end position="950"/>
    </location>
</feature>
<feature type="compositionally biased region" description="Polar residues" evidence="2">
    <location>
        <begin position="966"/>
        <end position="979"/>
    </location>
</feature>
<feature type="compositionally biased region" description="Polar residues" evidence="2">
    <location>
        <begin position="1079"/>
        <end position="1090"/>
    </location>
</feature>
<feature type="compositionally biased region" description="Low complexity" evidence="2">
    <location>
        <begin position="1109"/>
        <end position="1150"/>
    </location>
</feature>
<feature type="compositionally biased region" description="Polar residues" evidence="2">
    <location>
        <begin position="1151"/>
        <end position="1195"/>
    </location>
</feature>
<feature type="compositionally biased region" description="Low complexity" evidence="2">
    <location>
        <begin position="1201"/>
        <end position="1211"/>
    </location>
</feature>
<feature type="compositionally biased region" description="Polar residues" evidence="2">
    <location>
        <begin position="1281"/>
        <end position="1306"/>
    </location>
</feature>
<feature type="compositionally biased region" description="Low complexity" evidence="2">
    <location>
        <begin position="1312"/>
        <end position="1321"/>
    </location>
</feature>
<feature type="compositionally biased region" description="Gly residues" evidence="2">
    <location>
        <begin position="1322"/>
        <end position="1343"/>
    </location>
</feature>
<feature type="compositionally biased region" description="Basic residues" evidence="2">
    <location>
        <begin position="1359"/>
        <end position="1371"/>
    </location>
</feature>
<feature type="compositionally biased region" description="Low complexity" evidence="2">
    <location>
        <begin position="1475"/>
        <end position="1497"/>
    </location>
</feature>
<feature type="compositionally biased region" description="Polar residues" evidence="2">
    <location>
        <begin position="1806"/>
        <end position="1819"/>
    </location>
</feature>
<feature type="compositionally biased region" description="Polar residues" evidence="2">
    <location>
        <begin position="2658"/>
        <end position="2678"/>
    </location>
</feature>
<feature type="sequence conflict" description="In Ref. 1; BAB01489." evidence="5" ref="1">
    <original>A</original>
    <variation>R</variation>
    <location>
        <position position="1993"/>
    </location>
</feature>
<keyword id="KW-0010">Activator</keyword>
<keyword id="KW-0539">Nucleus</keyword>
<keyword id="KW-1185">Reference proteome</keyword>
<keyword id="KW-0678">Repressor</keyword>
<keyword id="KW-0804">Transcription</keyword>
<keyword id="KW-0805">Transcription regulation</keyword>
<sequence>MMGTKVPSYNNKQQSGSNAGGNVNNNNNGPNINNPNNPNNTNSLPTTSGYNSSRFSVPNLDTDNFMTNIISMGVNKVGWALYRSNSNNNNNNINNNSSSSSSSNTSNNINSNTLVNDPILLAYLKTIELGVPCLWRKTRSKKPINNSSNNSNITSSTSTDSSLKNRLKNSPSETTPPNTTNNNSNNVTKDSPPNATNKMSTSPKSLSPTISNNNNNTTAAATTTTTTTNNSSNSPTSPTNNNNNNNNNNSPSSHNVVNSPPSTSSRSPPTVASVTSNTSTIQPISPIINRQTSSHNYQQPQQPYYNHQPLQPIQEYITTYELWVFNISNTSLLDFSHLNNVESGIVNLDNIGCNNSVIVQYLFKSLYNLVEYNMVSNDFIKIGNSFIKSSHILQKQKQSRNDYNNSIISGSVGSKKRLFEDFTNLYIEDDCLLSCSFSFFIYNKSIHLHFNVDKKRLKPLQELMKSEYINSPLFTSPNAFIAFFNNNNKNNINNNSNNIINNNNNSNINNNINNNNNQQQQQQQQQQQQQQQQQQQQQQQQQQQQQQQQQQQQQQQTINNNSNNISSNNDNNNTPSQMVPSIDGHDSSSSSSTPSQVTMQTTPTQEFSNNNNNNISINTTTVPITATTATATNKITTAATTTTTINNNNNKIQTESFGSTRNKKLNDEEEINFSLSSQQWKQLFNIGLANKAIIPKQQTPQQQEQQQIIGTIFKKNQLEVPKSIKTIITRGNSLPLINTFFPIELLFKFFPPISDISQYTYHEKLKEFGLEIFDKSPYALLEKGLNLFINNNNINIENNNNTSNEINNTGTQIPTKYKYVDFWSLPLFHSKESLIYGNDHFNATYCVKAVPSPSSPLTQHPSSPHSPFNNVNSPKSPQHPPSPKTPMISDDDQSLTANNEKKRHGKSQKKGRSSKRKKDDNSNNNNNNNTTTTSTITATTTTTTPTAATTGNDNFLAPQSKPPPSNIQETSQPQSLTTVQPQPPPQQQQQQQQQQQQQQQQQQQQQQQQQQQQQQQQQQQQQQQVVSSFSGQGLNSSMDLFGSDAFDTFKNKEDDLMHLSDTDIDLDLWTSHYVPPNQPTQNGSQKNNQRPLPVEDPFQVFQVPNKPATTTTTTTTTTTPTPNPTTTTTQPQTQPQQQSQQQQQPQQTNPILPTNSNLITNQKPQQYQPPLQDPFQSIDSQQPKSIQSPTLTNQPIGMVSPTLTNQPLQQYQPPPPPTQQPQQAHLKPPPPKQPSAKKNSKDGINSDENKPFLDGQFLCPVPYKAPSLSQNQLPILHLPHNTEQSPSNDDLSNPNHLHHGTPTSAISGVGGSSSSSGNNMIGSGGIVGSGGGNTNVSGSGGGMVSDPSKLTYSSEHHDPHHHHHHHHHHHPQNSQNLRNSYGNSNGVGGSQDESIDGLTTVYRNLTLSRPLGDNKNKNNAPYYCAPSYKPLDEHSLPHQLKFEYSYTPLVKPQNQLNQTKYSPFSNSHHNHHHNTTTNNNNNHNNNNNNNHPNNHHQNNNHHHLNITSSLFQPSNIQNVNSLPNIGSQKIMSISPPITPPMKGGHMIGTDINKNNNKKNNDEDENLEILSTIKQKDVNGLDSNLSSSALLSFFDQAINIKTTPPRSPVLSGYSGGGSNMNNGINGNSGFIGNGNSGFNTISSYQQNNISIEESLDLAFTIQQMTITNYDSTFGFSIDNSPLIKQSIDYYLENWLKIYTETGKVFNHHSLQFLTEESISDALDTVIDPLTTNTILETTVKTLFTFSNEIFKKIFPLSSFPLSIKEFCHLPSITLNNINNNIDLLNSQTYQNTNNSSSGGGIESQQYFSGSSGLNNSNDRNSMIPMDNSDDTSDLMSMDDHNSKNLITGTSLISTTASGAGAAITTNLINQNYEEFEWLPIPKIIVGYKEDWLEVPISTIKFWDKAQLEPYSPKKNITYFVLCPDTTAMRMHVPAFFSDLSCIYETNHLGNHVTQQQSQVQQAAAAAVAASQPTQQSSQHQSQQQQQQAAQQAAAAAAAAAAAQKNSSPFYNGIYYIPSAANTEFNPQTFINSYLLTCIQFGDYLKELSTKYSENNCMVLYIVNPFSDLSQISLSNQNQNQNQNSNSNESQQQQQQQSNNKQKQTQTNEDINHIRNSYLFMSSCFQTIVRDITCNQSLSITIQTIPIEQILFDDHPSIPVSKELAFSVFNKCRRISTISPMNFSINMNNINNMIGNNNSNSNNSSGWYYQLFNKIYEPLFILSNESSSSSSSTISTSTSASTSTSTSNTTTKNQQQQSQSQQSQQQSQQPKQLSTPTTPTTNSVSNSPSLQPQPLQTPNQLQPHQQEQKQQQQIPIIHFSYMLSDDNKWISCTIVDEQGELLENKLIPLAYSQIIGDYIWKDSFQNAWFFLTEIIGLSLSGQPCQVVIGKFGIISMQEYNDWKTTIIHFEDNLEVIKQHQQQSQSQNYSSTIDQIYKIENVIFLNLTLNNNIKSFLTEYLNDSKLSNSNNIKSVSPLSGQSFAIYPESPIMYTYNFPMNDNNDDYNSILNNNNNNILPPLSTSFVITSPSNLSGSVLTPTTTNSNVINNNQSKKEWPFTYMLSIVGIQSLQHQQQQQQQQQQQQQQQHPNIINHQELIRSITRSYHRLSYLNISPRYPDRLSILPIHFSISKRMSRTVCLISPLNPIPPPILFNRCPKLTPNSKQSPSPINSPHLNSNNT</sequence>
<reference key="1">
    <citation type="journal article" date="2000" name="Genes Cells">
        <title>amiB, a novel gene required for the growth/differentiation transition in Dictyostelium.</title>
        <authorList>
            <person name="Kon T."/>
            <person name="Adachi H."/>
            <person name="Sutoh K."/>
        </authorList>
    </citation>
    <scope>NUCLEOTIDE SEQUENCE [GENOMIC DNA]</scope>
    <scope>DEVELOPMENTAL STAGE</scope>
    <scope>DISRUPTION PHENOTYPE</scope>
    <source>
        <strain>AX2</strain>
    </source>
</reference>
<reference key="2">
    <citation type="journal article" date="2005" name="Nature">
        <title>The genome of the social amoeba Dictyostelium discoideum.</title>
        <authorList>
            <person name="Eichinger L."/>
            <person name="Pachebat J.A."/>
            <person name="Gloeckner G."/>
            <person name="Rajandream M.A."/>
            <person name="Sucgang R."/>
            <person name="Berriman M."/>
            <person name="Song J."/>
            <person name="Olsen R."/>
            <person name="Szafranski K."/>
            <person name="Xu Q."/>
            <person name="Tunggal B."/>
            <person name="Kummerfeld S."/>
            <person name="Madera M."/>
            <person name="Konfortov B.A."/>
            <person name="Rivero F."/>
            <person name="Bankier A.T."/>
            <person name="Lehmann R."/>
            <person name="Hamlin N."/>
            <person name="Davies R."/>
            <person name="Gaudet P."/>
            <person name="Fey P."/>
            <person name="Pilcher K."/>
            <person name="Chen G."/>
            <person name="Saunders D."/>
            <person name="Sodergren E.J."/>
            <person name="Davis P."/>
            <person name="Kerhornou A."/>
            <person name="Nie X."/>
            <person name="Hall N."/>
            <person name="Anjard C."/>
            <person name="Hemphill L."/>
            <person name="Bason N."/>
            <person name="Farbrother P."/>
            <person name="Desany B."/>
            <person name="Just E."/>
            <person name="Morio T."/>
            <person name="Rost R."/>
            <person name="Churcher C.M."/>
            <person name="Cooper J."/>
            <person name="Haydock S."/>
            <person name="van Driessche N."/>
            <person name="Cronin A."/>
            <person name="Goodhead I."/>
            <person name="Muzny D.M."/>
            <person name="Mourier T."/>
            <person name="Pain A."/>
            <person name="Lu M."/>
            <person name="Harper D."/>
            <person name="Lindsay R."/>
            <person name="Hauser H."/>
            <person name="James K.D."/>
            <person name="Quiles M."/>
            <person name="Madan Babu M."/>
            <person name="Saito T."/>
            <person name="Buchrieser C."/>
            <person name="Wardroper A."/>
            <person name="Felder M."/>
            <person name="Thangavelu M."/>
            <person name="Johnson D."/>
            <person name="Knights A."/>
            <person name="Loulseged H."/>
            <person name="Mungall K.L."/>
            <person name="Oliver K."/>
            <person name="Price C."/>
            <person name="Quail M.A."/>
            <person name="Urushihara H."/>
            <person name="Hernandez J."/>
            <person name="Rabbinowitsch E."/>
            <person name="Steffen D."/>
            <person name="Sanders M."/>
            <person name="Ma J."/>
            <person name="Kohara Y."/>
            <person name="Sharp S."/>
            <person name="Simmonds M.N."/>
            <person name="Spiegler S."/>
            <person name="Tivey A."/>
            <person name="Sugano S."/>
            <person name="White B."/>
            <person name="Walker D."/>
            <person name="Woodward J.R."/>
            <person name="Winckler T."/>
            <person name="Tanaka Y."/>
            <person name="Shaulsky G."/>
            <person name="Schleicher M."/>
            <person name="Weinstock G.M."/>
            <person name="Rosenthal A."/>
            <person name="Cox E.C."/>
            <person name="Chisholm R.L."/>
            <person name="Gibbs R.A."/>
            <person name="Loomis W.F."/>
            <person name="Platzer M."/>
            <person name="Kay R.R."/>
            <person name="Williams J.G."/>
            <person name="Dear P.H."/>
            <person name="Noegel A.A."/>
            <person name="Barrell B.G."/>
            <person name="Kuspa A."/>
        </authorList>
    </citation>
    <scope>NUCLEOTIDE SEQUENCE [LARGE SCALE GENOMIC DNA]</scope>
    <source>
        <strain>AX4</strain>
    </source>
</reference>
<reference key="3">
    <citation type="journal article" date="2004" name="Cell Motil. Cytoskeleton">
        <title>Keratocyte-like locomotion in amiB-null Dictyostelium cells.</title>
        <authorList>
            <person name="Asano Y."/>
            <person name="Mizuno T."/>
            <person name="Kon T."/>
            <person name="Nagasaki A."/>
            <person name="Sutoh K."/>
            <person name="Uyeda T.Q."/>
        </authorList>
    </citation>
    <scope>DISRUPTION PHENOTYPE</scope>
    <source>
        <strain>AX2</strain>
    </source>
</reference>
<reference key="4">
    <citation type="journal article" date="2008" name="Nucleic Acids Res.">
        <title>Comparative genomics supports a deep evolutionary origin for the large, four-module transcriptional mediator complex.</title>
        <authorList>
            <person name="Bourbon H.-M."/>
        </authorList>
    </citation>
    <scope>NOMENCLATURE</scope>
</reference>
<gene>
    <name type="primary">amiB</name>
    <name type="synonym">med13</name>
    <name type="ORF">DDB_G0282375</name>
</gene>
<proteinExistence type="evidence at transcript level"/>
<name>MED13_DICDI</name>